<keyword id="KW-0342">GTP-binding</keyword>
<keyword id="KW-0378">Hydrolase</keyword>
<keyword id="KW-0479">Metal-binding</keyword>
<keyword id="KW-0547">Nucleotide-binding</keyword>
<keyword id="KW-0554">One-carbon metabolism</keyword>
<keyword id="KW-0862">Zinc</keyword>
<sequence length="189" mass="21307">MEQIDKQKIADAVKVILEAVGENPDREGLIDTPMRVARMYEEVFAGLKKDPSVHFDTIFEEQHEELVLVKDIRFSSMCEHHLVPFFGVAHVAYLPQNGRVAGLSKLARVVDDVSRRPQLQERITTTVAEIMMDKLKPLGVMVIMEAEHMCMTIRGVNKPGTKTITSAVRGAFKNDDKLRSEVLALIKHN</sequence>
<name>GCH1_LISMH</name>
<evidence type="ECO:0000255" key="1">
    <source>
        <dbReference type="HAMAP-Rule" id="MF_00223"/>
    </source>
</evidence>
<comment type="catalytic activity">
    <reaction evidence="1">
        <text>GTP + H2O = 7,8-dihydroneopterin 3'-triphosphate + formate + H(+)</text>
        <dbReference type="Rhea" id="RHEA:17473"/>
        <dbReference type="ChEBI" id="CHEBI:15377"/>
        <dbReference type="ChEBI" id="CHEBI:15378"/>
        <dbReference type="ChEBI" id="CHEBI:15740"/>
        <dbReference type="ChEBI" id="CHEBI:37565"/>
        <dbReference type="ChEBI" id="CHEBI:58462"/>
        <dbReference type="EC" id="3.5.4.16"/>
    </reaction>
</comment>
<comment type="pathway">
    <text evidence="1">Cofactor biosynthesis; 7,8-dihydroneopterin triphosphate biosynthesis; 7,8-dihydroneopterin triphosphate from GTP: step 1/1.</text>
</comment>
<comment type="subunit">
    <text evidence="1">Homomer.</text>
</comment>
<comment type="similarity">
    <text evidence="1">Belongs to the GTP cyclohydrolase I family.</text>
</comment>
<protein>
    <recommendedName>
        <fullName evidence="1">GTP cyclohydrolase 1</fullName>
        <ecNumber evidence="1">3.5.4.16</ecNumber>
    </recommendedName>
    <alternativeName>
        <fullName evidence="1">GTP cyclohydrolase I</fullName>
        <shortName evidence="1">GTP-CH-I</shortName>
    </alternativeName>
</protein>
<organism>
    <name type="scientific">Listeria monocytogenes serotype 4a (strain HCC23)</name>
    <dbReference type="NCBI Taxonomy" id="552536"/>
    <lineage>
        <taxon>Bacteria</taxon>
        <taxon>Bacillati</taxon>
        <taxon>Bacillota</taxon>
        <taxon>Bacilli</taxon>
        <taxon>Bacillales</taxon>
        <taxon>Listeriaceae</taxon>
        <taxon>Listeria</taxon>
    </lineage>
</organism>
<gene>
    <name evidence="1" type="primary">folE</name>
    <name type="ordered locus">LMHCC_0623</name>
</gene>
<dbReference type="EC" id="3.5.4.16" evidence="1"/>
<dbReference type="EMBL" id="CP001175">
    <property type="protein sequence ID" value="ACK38979.1"/>
    <property type="molecule type" value="Genomic_DNA"/>
</dbReference>
<dbReference type="RefSeq" id="WP_003728758.1">
    <property type="nucleotide sequence ID" value="NC_011660.1"/>
</dbReference>
<dbReference type="SMR" id="B8DBZ3"/>
<dbReference type="KEGG" id="lmh:LMHCC_0623"/>
<dbReference type="HOGENOM" id="CLU_049768_3_3_9"/>
<dbReference type="UniPathway" id="UPA00848">
    <property type="reaction ID" value="UER00151"/>
</dbReference>
<dbReference type="GO" id="GO:0005737">
    <property type="term" value="C:cytoplasm"/>
    <property type="evidence" value="ECO:0007669"/>
    <property type="project" value="TreeGrafter"/>
</dbReference>
<dbReference type="GO" id="GO:0005525">
    <property type="term" value="F:GTP binding"/>
    <property type="evidence" value="ECO:0007669"/>
    <property type="project" value="UniProtKB-KW"/>
</dbReference>
<dbReference type="GO" id="GO:0003934">
    <property type="term" value="F:GTP cyclohydrolase I activity"/>
    <property type="evidence" value="ECO:0007669"/>
    <property type="project" value="UniProtKB-UniRule"/>
</dbReference>
<dbReference type="GO" id="GO:0008270">
    <property type="term" value="F:zinc ion binding"/>
    <property type="evidence" value="ECO:0007669"/>
    <property type="project" value="UniProtKB-UniRule"/>
</dbReference>
<dbReference type="GO" id="GO:0006730">
    <property type="term" value="P:one-carbon metabolic process"/>
    <property type="evidence" value="ECO:0007669"/>
    <property type="project" value="UniProtKB-UniRule"/>
</dbReference>
<dbReference type="GO" id="GO:0006729">
    <property type="term" value="P:tetrahydrobiopterin biosynthetic process"/>
    <property type="evidence" value="ECO:0007669"/>
    <property type="project" value="TreeGrafter"/>
</dbReference>
<dbReference type="GO" id="GO:0046654">
    <property type="term" value="P:tetrahydrofolate biosynthetic process"/>
    <property type="evidence" value="ECO:0007669"/>
    <property type="project" value="UniProtKB-UniRule"/>
</dbReference>
<dbReference type="FunFam" id="1.10.286.10:FF:000001">
    <property type="entry name" value="GTP cyclohydrolase 1"/>
    <property type="match status" value="1"/>
</dbReference>
<dbReference type="FunFam" id="3.30.1130.10:FF:000001">
    <property type="entry name" value="GTP cyclohydrolase 1"/>
    <property type="match status" value="1"/>
</dbReference>
<dbReference type="Gene3D" id="1.10.286.10">
    <property type="match status" value="1"/>
</dbReference>
<dbReference type="Gene3D" id="3.30.1130.10">
    <property type="match status" value="1"/>
</dbReference>
<dbReference type="HAMAP" id="MF_00223">
    <property type="entry name" value="FolE"/>
    <property type="match status" value="1"/>
</dbReference>
<dbReference type="InterPro" id="IPR043133">
    <property type="entry name" value="GTP-CH-I_C/QueF"/>
</dbReference>
<dbReference type="InterPro" id="IPR043134">
    <property type="entry name" value="GTP-CH-I_N"/>
</dbReference>
<dbReference type="InterPro" id="IPR001474">
    <property type="entry name" value="GTP_CycHdrlase_I"/>
</dbReference>
<dbReference type="InterPro" id="IPR018234">
    <property type="entry name" value="GTP_CycHdrlase_I_CS"/>
</dbReference>
<dbReference type="InterPro" id="IPR020602">
    <property type="entry name" value="GTP_CycHdrlase_I_dom"/>
</dbReference>
<dbReference type="NCBIfam" id="TIGR00063">
    <property type="entry name" value="folE"/>
    <property type="match status" value="1"/>
</dbReference>
<dbReference type="NCBIfam" id="NF006825">
    <property type="entry name" value="PRK09347.1-2"/>
    <property type="match status" value="1"/>
</dbReference>
<dbReference type="NCBIfam" id="NF006826">
    <property type="entry name" value="PRK09347.1-3"/>
    <property type="match status" value="1"/>
</dbReference>
<dbReference type="PANTHER" id="PTHR11109:SF7">
    <property type="entry name" value="GTP CYCLOHYDROLASE 1"/>
    <property type="match status" value="1"/>
</dbReference>
<dbReference type="PANTHER" id="PTHR11109">
    <property type="entry name" value="GTP CYCLOHYDROLASE I"/>
    <property type="match status" value="1"/>
</dbReference>
<dbReference type="Pfam" id="PF01227">
    <property type="entry name" value="GTP_cyclohydroI"/>
    <property type="match status" value="1"/>
</dbReference>
<dbReference type="SUPFAM" id="SSF55620">
    <property type="entry name" value="Tetrahydrobiopterin biosynthesis enzymes-like"/>
    <property type="match status" value="1"/>
</dbReference>
<dbReference type="PROSITE" id="PS00859">
    <property type="entry name" value="GTP_CYCLOHYDROL_1_1"/>
    <property type="match status" value="1"/>
</dbReference>
<dbReference type="PROSITE" id="PS00860">
    <property type="entry name" value="GTP_CYCLOHYDROL_1_2"/>
    <property type="match status" value="1"/>
</dbReference>
<accession>B8DBZ3</accession>
<reference key="1">
    <citation type="journal article" date="2011" name="J. Bacteriol.">
        <title>Genome sequence of lineage III Listeria monocytogenes strain HCC23.</title>
        <authorList>
            <person name="Steele C.L."/>
            <person name="Donaldson J.R."/>
            <person name="Paul D."/>
            <person name="Banes M.M."/>
            <person name="Arick T."/>
            <person name="Bridges S.M."/>
            <person name="Lawrence M.L."/>
        </authorList>
    </citation>
    <scope>NUCLEOTIDE SEQUENCE [LARGE SCALE GENOMIC DNA]</scope>
    <source>
        <strain>HCC23</strain>
    </source>
</reference>
<feature type="chain" id="PRO_1000124921" description="GTP cyclohydrolase 1">
    <location>
        <begin position="1"/>
        <end position="189"/>
    </location>
</feature>
<feature type="binding site" evidence="1">
    <location>
        <position position="78"/>
    </location>
    <ligand>
        <name>Zn(2+)</name>
        <dbReference type="ChEBI" id="CHEBI:29105"/>
    </ligand>
</feature>
<feature type="binding site" evidence="1">
    <location>
        <position position="81"/>
    </location>
    <ligand>
        <name>Zn(2+)</name>
        <dbReference type="ChEBI" id="CHEBI:29105"/>
    </ligand>
</feature>
<feature type="binding site" evidence="1">
    <location>
        <position position="150"/>
    </location>
    <ligand>
        <name>Zn(2+)</name>
        <dbReference type="ChEBI" id="CHEBI:29105"/>
    </ligand>
</feature>
<proteinExistence type="inferred from homology"/>